<name>THIE_HAEIE</name>
<protein>
    <recommendedName>
        <fullName evidence="1">Thiamine-phosphate synthase</fullName>
        <shortName evidence="1">TP synthase</shortName>
        <shortName evidence="1">TPS</shortName>
        <ecNumber evidence="1">2.5.1.3</ecNumber>
    </recommendedName>
    <alternativeName>
        <fullName evidence="1">Thiamine-phosphate pyrophosphorylase</fullName>
        <shortName evidence="1">TMP pyrophosphorylase</shortName>
        <shortName evidence="1">TMP-PPase</shortName>
    </alternativeName>
</protein>
<gene>
    <name evidence="1" type="primary">thiE</name>
    <name type="ordered locus">CGSHiEE_00910</name>
</gene>
<dbReference type="EC" id="2.5.1.3" evidence="1"/>
<dbReference type="EMBL" id="CP000671">
    <property type="protein sequence ID" value="ABQ97672.1"/>
    <property type="molecule type" value="Genomic_DNA"/>
</dbReference>
<dbReference type="SMR" id="A5UA71"/>
<dbReference type="KEGG" id="hip:CGSHiEE_00910"/>
<dbReference type="HOGENOM" id="CLU_018272_3_2_6"/>
<dbReference type="UniPathway" id="UPA00060">
    <property type="reaction ID" value="UER00141"/>
</dbReference>
<dbReference type="GO" id="GO:0005737">
    <property type="term" value="C:cytoplasm"/>
    <property type="evidence" value="ECO:0007669"/>
    <property type="project" value="TreeGrafter"/>
</dbReference>
<dbReference type="GO" id="GO:0000287">
    <property type="term" value="F:magnesium ion binding"/>
    <property type="evidence" value="ECO:0007669"/>
    <property type="project" value="UniProtKB-UniRule"/>
</dbReference>
<dbReference type="GO" id="GO:0004789">
    <property type="term" value="F:thiamine-phosphate diphosphorylase activity"/>
    <property type="evidence" value="ECO:0007669"/>
    <property type="project" value="UniProtKB-UniRule"/>
</dbReference>
<dbReference type="GO" id="GO:0009228">
    <property type="term" value="P:thiamine biosynthetic process"/>
    <property type="evidence" value="ECO:0007669"/>
    <property type="project" value="UniProtKB-KW"/>
</dbReference>
<dbReference type="GO" id="GO:0009229">
    <property type="term" value="P:thiamine diphosphate biosynthetic process"/>
    <property type="evidence" value="ECO:0007669"/>
    <property type="project" value="UniProtKB-UniRule"/>
</dbReference>
<dbReference type="CDD" id="cd00564">
    <property type="entry name" value="TMP_TenI"/>
    <property type="match status" value="1"/>
</dbReference>
<dbReference type="FunFam" id="3.20.20.70:FF:000096">
    <property type="entry name" value="Thiamine-phosphate synthase"/>
    <property type="match status" value="1"/>
</dbReference>
<dbReference type="Gene3D" id="3.20.20.70">
    <property type="entry name" value="Aldolase class I"/>
    <property type="match status" value="1"/>
</dbReference>
<dbReference type="HAMAP" id="MF_00097">
    <property type="entry name" value="TMP_synthase"/>
    <property type="match status" value="1"/>
</dbReference>
<dbReference type="InterPro" id="IPR013785">
    <property type="entry name" value="Aldolase_TIM"/>
</dbReference>
<dbReference type="InterPro" id="IPR036206">
    <property type="entry name" value="ThiamineP_synth_sf"/>
</dbReference>
<dbReference type="InterPro" id="IPR022998">
    <property type="entry name" value="ThiamineP_synth_TenI"/>
</dbReference>
<dbReference type="InterPro" id="IPR034291">
    <property type="entry name" value="TMP_synthase"/>
</dbReference>
<dbReference type="NCBIfam" id="TIGR00693">
    <property type="entry name" value="thiE"/>
    <property type="match status" value="1"/>
</dbReference>
<dbReference type="PANTHER" id="PTHR20857">
    <property type="entry name" value="THIAMINE-PHOSPHATE PYROPHOSPHORYLASE"/>
    <property type="match status" value="1"/>
</dbReference>
<dbReference type="PANTHER" id="PTHR20857:SF15">
    <property type="entry name" value="THIAMINE-PHOSPHATE SYNTHASE"/>
    <property type="match status" value="1"/>
</dbReference>
<dbReference type="Pfam" id="PF02581">
    <property type="entry name" value="TMP-TENI"/>
    <property type="match status" value="1"/>
</dbReference>
<dbReference type="SUPFAM" id="SSF51391">
    <property type="entry name" value="Thiamin phosphate synthase"/>
    <property type="match status" value="1"/>
</dbReference>
<organism>
    <name type="scientific">Haemophilus influenzae (strain PittEE)</name>
    <dbReference type="NCBI Taxonomy" id="374930"/>
    <lineage>
        <taxon>Bacteria</taxon>
        <taxon>Pseudomonadati</taxon>
        <taxon>Pseudomonadota</taxon>
        <taxon>Gammaproteobacteria</taxon>
        <taxon>Pasteurellales</taxon>
        <taxon>Pasteurellaceae</taxon>
        <taxon>Haemophilus</taxon>
    </lineage>
</organism>
<comment type="function">
    <text evidence="1">Condenses 4-methyl-5-(beta-hydroxyethyl)thiazole monophosphate (THZ-P) and 2-methyl-4-amino-5-hydroxymethyl pyrimidine pyrophosphate (HMP-PP) to form thiamine monophosphate (TMP).</text>
</comment>
<comment type="catalytic activity">
    <reaction evidence="1">
        <text>2-[(2R,5Z)-2-carboxy-4-methylthiazol-5(2H)-ylidene]ethyl phosphate + 4-amino-2-methyl-5-(diphosphooxymethyl)pyrimidine + 2 H(+) = thiamine phosphate + CO2 + diphosphate</text>
        <dbReference type="Rhea" id="RHEA:47844"/>
        <dbReference type="ChEBI" id="CHEBI:15378"/>
        <dbReference type="ChEBI" id="CHEBI:16526"/>
        <dbReference type="ChEBI" id="CHEBI:33019"/>
        <dbReference type="ChEBI" id="CHEBI:37575"/>
        <dbReference type="ChEBI" id="CHEBI:57841"/>
        <dbReference type="ChEBI" id="CHEBI:62899"/>
        <dbReference type="EC" id="2.5.1.3"/>
    </reaction>
</comment>
<comment type="catalytic activity">
    <reaction evidence="1">
        <text>2-(2-carboxy-4-methylthiazol-5-yl)ethyl phosphate + 4-amino-2-methyl-5-(diphosphooxymethyl)pyrimidine + 2 H(+) = thiamine phosphate + CO2 + diphosphate</text>
        <dbReference type="Rhea" id="RHEA:47848"/>
        <dbReference type="ChEBI" id="CHEBI:15378"/>
        <dbReference type="ChEBI" id="CHEBI:16526"/>
        <dbReference type="ChEBI" id="CHEBI:33019"/>
        <dbReference type="ChEBI" id="CHEBI:37575"/>
        <dbReference type="ChEBI" id="CHEBI:57841"/>
        <dbReference type="ChEBI" id="CHEBI:62890"/>
        <dbReference type="EC" id="2.5.1.3"/>
    </reaction>
</comment>
<comment type="catalytic activity">
    <reaction evidence="1">
        <text>4-methyl-5-(2-phosphooxyethyl)-thiazole + 4-amino-2-methyl-5-(diphosphooxymethyl)pyrimidine + H(+) = thiamine phosphate + diphosphate</text>
        <dbReference type="Rhea" id="RHEA:22328"/>
        <dbReference type="ChEBI" id="CHEBI:15378"/>
        <dbReference type="ChEBI" id="CHEBI:33019"/>
        <dbReference type="ChEBI" id="CHEBI:37575"/>
        <dbReference type="ChEBI" id="CHEBI:57841"/>
        <dbReference type="ChEBI" id="CHEBI:58296"/>
        <dbReference type="EC" id="2.5.1.3"/>
    </reaction>
</comment>
<comment type="cofactor">
    <cofactor evidence="1">
        <name>Mg(2+)</name>
        <dbReference type="ChEBI" id="CHEBI:18420"/>
    </cofactor>
    <text evidence="1">Binds 1 Mg(2+) ion per subunit.</text>
</comment>
<comment type="pathway">
    <text evidence="1">Cofactor biosynthesis; thiamine diphosphate biosynthesis; thiamine phosphate from 4-amino-2-methyl-5-diphosphomethylpyrimidine and 4-methyl-5-(2-phosphoethyl)-thiazole: step 1/1.</text>
</comment>
<comment type="similarity">
    <text evidence="1">Belongs to the thiamine-phosphate synthase family.</text>
</comment>
<keyword id="KW-0460">Magnesium</keyword>
<keyword id="KW-0479">Metal-binding</keyword>
<keyword id="KW-0784">Thiamine biosynthesis</keyword>
<keyword id="KW-0808">Transferase</keyword>
<feature type="chain" id="PRO_1000008141" description="Thiamine-phosphate synthase">
    <location>
        <begin position="1"/>
        <end position="226"/>
    </location>
</feature>
<feature type="binding site" evidence="1">
    <location>
        <begin position="46"/>
        <end position="50"/>
    </location>
    <ligand>
        <name>4-amino-2-methyl-5-(diphosphooxymethyl)pyrimidine</name>
        <dbReference type="ChEBI" id="CHEBI:57841"/>
    </ligand>
</feature>
<feature type="binding site" evidence="1">
    <location>
        <position position="83"/>
    </location>
    <ligand>
        <name>4-amino-2-methyl-5-(diphosphooxymethyl)pyrimidine</name>
        <dbReference type="ChEBI" id="CHEBI:57841"/>
    </ligand>
</feature>
<feature type="binding site" evidence="1">
    <location>
        <position position="84"/>
    </location>
    <ligand>
        <name>Mg(2+)</name>
        <dbReference type="ChEBI" id="CHEBI:18420"/>
    </ligand>
</feature>
<feature type="binding site" evidence="1">
    <location>
        <position position="103"/>
    </location>
    <ligand>
        <name>Mg(2+)</name>
        <dbReference type="ChEBI" id="CHEBI:18420"/>
    </ligand>
</feature>
<feature type="binding site" evidence="1">
    <location>
        <position position="122"/>
    </location>
    <ligand>
        <name>4-amino-2-methyl-5-(diphosphooxymethyl)pyrimidine</name>
        <dbReference type="ChEBI" id="CHEBI:57841"/>
    </ligand>
</feature>
<feature type="binding site" evidence="1">
    <location>
        <begin position="149"/>
        <end position="151"/>
    </location>
    <ligand>
        <name>2-[(2R,5Z)-2-carboxy-4-methylthiazol-5(2H)-ylidene]ethyl phosphate</name>
        <dbReference type="ChEBI" id="CHEBI:62899"/>
    </ligand>
</feature>
<feature type="binding site" evidence="1">
    <location>
        <position position="152"/>
    </location>
    <ligand>
        <name>4-amino-2-methyl-5-(diphosphooxymethyl)pyrimidine</name>
        <dbReference type="ChEBI" id="CHEBI:57841"/>
    </ligand>
</feature>
<feature type="binding site" evidence="1">
    <location>
        <position position="181"/>
    </location>
    <ligand>
        <name>2-[(2R,5Z)-2-carboxy-4-methylthiazol-5(2H)-ylidene]ethyl phosphate</name>
        <dbReference type="ChEBI" id="CHEBI:62899"/>
    </ligand>
</feature>
<feature type="binding site" evidence="1">
    <location>
        <begin position="201"/>
        <end position="202"/>
    </location>
    <ligand>
        <name>2-[(2R,5Z)-2-carboxy-4-methylthiazol-5(2H)-ylidene]ethyl phosphate</name>
        <dbReference type="ChEBI" id="CHEBI:62899"/>
    </ligand>
</feature>
<proteinExistence type="inferred from homology"/>
<evidence type="ECO:0000255" key="1">
    <source>
        <dbReference type="HAMAP-Rule" id="MF_00097"/>
    </source>
</evidence>
<reference key="1">
    <citation type="journal article" date="2007" name="Genome Biol.">
        <title>Characterization and modeling of the Haemophilus influenzae core and supragenomes based on the complete genomic sequences of Rd and 12 clinical nontypeable strains.</title>
        <authorList>
            <person name="Hogg J.S."/>
            <person name="Hu F.Z."/>
            <person name="Janto B."/>
            <person name="Boissy R."/>
            <person name="Hayes J."/>
            <person name="Keefe R."/>
            <person name="Post J.C."/>
            <person name="Ehrlich G.D."/>
        </authorList>
    </citation>
    <scope>NUCLEOTIDE SEQUENCE [LARGE SCALE GENOMIC DNA]</scope>
    <source>
        <strain>PittEE</strain>
    </source>
</reference>
<accession>A5UA71</accession>
<sequence>MKNIQKILPLYFVAGTQDCRHLGENLSENLLFVLKQALEGGITCFQFRDKGKFSLEHTPSAQKALAMSCRDLCREYGVPFIVDDNVDLALEIEADGIHVGQSDMPVQEIRAKTDKPLIIGWSVNRLDEAKIGENLAEIDYFGIGPIFPTQSKENPKPTLGMAFIQTLRNVGITKPLVAIGGVKLAHVKTLREFGADGVAVITAITHADNVQAATKALREASDEYAK</sequence>